<comment type="function">
    <text evidence="2">Catalyzes the formation of (3R,6R,10S,11R,14R)-spiroviolene from geranylgeranyl diphosphate (GGPP) via a 1,11-cyclization and a 10Re,14Si-cyclization.</text>
</comment>
<comment type="catalytic activity">
    <reaction evidence="2">
        <text>(2E,6E,10E)-geranylgeranyl diphosphate = (-)-spiroviolene + diphosphate</text>
        <dbReference type="Rhea" id="RHEA:53620"/>
        <dbReference type="ChEBI" id="CHEBI:33019"/>
        <dbReference type="ChEBI" id="CHEBI:58756"/>
        <dbReference type="ChEBI" id="CHEBI:137523"/>
        <dbReference type="EC" id="4.2.3.158"/>
    </reaction>
</comment>
<comment type="cofactor">
    <cofactor evidence="1">
        <name>Mg(2+)</name>
        <dbReference type="ChEBI" id="CHEBI:18420"/>
    </cofactor>
    <text evidence="1">Binds 3 Mg(2+) ions per subunit.</text>
</comment>
<comment type="domain">
    <text evidence="5">The Asp-Asp-Xaa-Xaa-Xaa-Asp (DDXXXD) and Asn-Xaa-Xaa-Xaa-Ser-Xaa-Xaa-Xaa-Glu (NSE) motifs are important for the catalytic activity, presumably through binding to Mg(2+).</text>
</comment>
<comment type="similarity">
    <text evidence="4">Belongs to the terpene synthase family.</text>
</comment>
<keyword id="KW-0456">Lyase</keyword>
<keyword id="KW-0460">Magnesium</keyword>
<keyword id="KW-0479">Metal-binding</keyword>
<accession>P0DPK6</accession>
<protein>
    <recommendedName>
        <fullName evidence="3">Spiroviolene synthase</fullName>
        <shortName evidence="3">SvS</shortName>
        <ecNumber evidence="2">4.2.3.158</ecNumber>
    </recommendedName>
</protein>
<organism>
    <name type="scientific">Streptomyces violens</name>
    <name type="common">Chainia violens</name>
    <dbReference type="NCBI Taxonomy" id="66377"/>
    <lineage>
        <taxon>Bacteria</taxon>
        <taxon>Bacillati</taxon>
        <taxon>Actinomycetota</taxon>
        <taxon>Actinomycetes</taxon>
        <taxon>Kitasatosporales</taxon>
        <taxon>Streptomycetaceae</taxon>
        <taxon>Streptomyces</taxon>
    </lineage>
</organism>
<sequence length="359" mass="39968">MTVNEIDLPPIFCPLESARHPRAHLVDERAREWIRTSPMCTTDEERTWVAASCSTDFFARFAPDAATDDRLLWTSLWVYWGFAFDDHRCDNGPFSNRPAAFSALAGRVQRALEAPSARDESDGFIPALQEIAAQFRSFGTPLQVRRFAAAHRAWLSGVTWQIGNAAAGRMPGLDEYVAMRLLSAGGEPPFAMLELATGLEVPAQDLERPAVRALTEMAIMVAALDNDRHSLRKELARGQTDQNVYSVLMQETGLPLQEAVAAATRLRDRVLLRFMAVHDRVRPGAGLELSTYLQGLRYGIRGNAEWGLRVPRYLSLGRVPDPMDEAPLEWAESPADDDRSAPRGLPTVAWWWDDALLGV</sequence>
<proteinExistence type="evidence at protein level"/>
<feature type="chain" id="PRO_0000444978" description="Spiroviolene synthase">
    <location>
        <begin position="1"/>
        <end position="359"/>
    </location>
</feature>
<feature type="short sequence motif" description="DDXXXD motif" evidence="5">
    <location>
        <begin position="85"/>
        <end position="90"/>
    </location>
</feature>
<feature type="short sequence motif" description="NXXXSXXXE motif" evidence="5">
    <location>
        <begin position="226"/>
        <end position="234"/>
    </location>
</feature>
<feature type="binding site" evidence="1">
    <location>
        <position position="85"/>
    </location>
    <ligand>
        <name>Mg(2+)</name>
        <dbReference type="ChEBI" id="CHEBI:18420"/>
        <label>1</label>
    </ligand>
</feature>
<feature type="binding site" evidence="1">
    <location>
        <position position="90"/>
    </location>
    <ligand>
        <name>Mg(2+)</name>
        <dbReference type="ChEBI" id="CHEBI:18420"/>
        <label>1</label>
    </ligand>
</feature>
<feature type="binding site" evidence="1">
    <location>
        <position position="90"/>
    </location>
    <ligand>
        <name>Mg(2+)</name>
        <dbReference type="ChEBI" id="CHEBI:18420"/>
        <label>2</label>
    </ligand>
</feature>
<feature type="binding site" evidence="1">
    <location>
        <position position="180"/>
    </location>
    <ligand>
        <name>substrate</name>
    </ligand>
</feature>
<feature type="binding site" evidence="1">
    <location>
        <position position="226"/>
    </location>
    <ligand>
        <name>Mg(2+)</name>
        <dbReference type="ChEBI" id="CHEBI:18420"/>
        <label>3</label>
    </ligand>
</feature>
<feature type="binding site" evidence="1">
    <location>
        <position position="230"/>
    </location>
    <ligand>
        <name>Mg(2+)</name>
        <dbReference type="ChEBI" id="CHEBI:18420"/>
        <label>3</label>
    </ligand>
</feature>
<feature type="binding site" evidence="1">
    <location>
        <position position="233"/>
    </location>
    <ligand>
        <name>substrate</name>
    </ligand>
</feature>
<feature type="binding site" evidence="1">
    <location>
        <position position="234"/>
    </location>
    <ligand>
        <name>Mg(2+)</name>
        <dbReference type="ChEBI" id="CHEBI:18420"/>
        <label>3</label>
    </ligand>
</feature>
<feature type="binding site" evidence="1">
    <location>
        <begin position="312"/>
        <end position="313"/>
    </location>
    <ligand>
        <name>substrate</name>
    </ligand>
</feature>
<dbReference type="EC" id="4.2.3.158" evidence="2"/>
<dbReference type="SMR" id="P0DPK6"/>
<dbReference type="GO" id="GO:0046872">
    <property type="term" value="F:metal ion binding"/>
    <property type="evidence" value="ECO:0007669"/>
    <property type="project" value="UniProtKB-KW"/>
</dbReference>
<dbReference type="GO" id="GO:0010333">
    <property type="term" value="F:terpene synthase activity"/>
    <property type="evidence" value="ECO:0007669"/>
    <property type="project" value="InterPro"/>
</dbReference>
<dbReference type="Gene3D" id="1.10.600.10">
    <property type="entry name" value="Farnesyl Diphosphate Synthase"/>
    <property type="match status" value="1"/>
</dbReference>
<dbReference type="InterPro" id="IPR008949">
    <property type="entry name" value="Isoprenoid_synthase_dom_sf"/>
</dbReference>
<dbReference type="InterPro" id="IPR034686">
    <property type="entry name" value="Terpene_cyclase-like_2"/>
</dbReference>
<dbReference type="PANTHER" id="PTHR35201:SF4">
    <property type="entry name" value="BETA-PINACENE SYNTHASE-RELATED"/>
    <property type="match status" value="1"/>
</dbReference>
<dbReference type="PANTHER" id="PTHR35201">
    <property type="entry name" value="TERPENE SYNTHASE"/>
    <property type="match status" value="1"/>
</dbReference>
<dbReference type="Pfam" id="PF19086">
    <property type="entry name" value="Terpene_syn_C_2"/>
    <property type="match status" value="1"/>
</dbReference>
<dbReference type="SFLD" id="SFLDS00005">
    <property type="entry name" value="Isoprenoid_Synthase_Type_I"/>
    <property type="match status" value="1"/>
</dbReference>
<dbReference type="SFLD" id="SFLDG01020">
    <property type="entry name" value="Terpene_Cyclase_Like_2"/>
    <property type="match status" value="1"/>
</dbReference>
<dbReference type="SUPFAM" id="SSF48576">
    <property type="entry name" value="Terpenoid synthases"/>
    <property type="match status" value="1"/>
</dbReference>
<evidence type="ECO:0000250" key="1">
    <source>
        <dbReference type="UniProtKB" id="B5HDJ6"/>
    </source>
</evidence>
<evidence type="ECO:0000269" key="2">
    <source>
    </source>
</evidence>
<evidence type="ECO:0000303" key="3">
    <source>
    </source>
</evidence>
<evidence type="ECO:0000305" key="4"/>
<evidence type="ECO:0000305" key="5">
    <source>
    </source>
</evidence>
<name>SPVIS_STRVB</name>
<reference key="1">
    <citation type="journal article" date="2017" name="Angew. Chem. Int. Ed.">
        <title>Mechanistic investigations of two bacterial diterpene cyclases: spiroviolene synthase and tsukubadiene synthase.</title>
        <authorList>
            <person name="Rabe P."/>
            <person name="Rinkel J."/>
            <person name="Dolja E."/>
            <person name="Schmitz T."/>
            <person name="Nubbemeyer B."/>
            <person name="Luu T.H."/>
            <person name="Dickschat J.S."/>
        </authorList>
    </citation>
    <scope>FUNCTION</scope>
    <scope>CATALYTIC ACTIVITY</scope>
    <scope>DOMAIN</scope>
    <scope>REACTION MECHANISM</scope>
    <source>
        <strain>ATCC 15898 / DSM 40597 / NRRL ISP-5597</strain>
    </source>
</reference>